<organism>
    <name type="scientific">Yersinia pestis bv. Antiqua (strain Antiqua)</name>
    <dbReference type="NCBI Taxonomy" id="360102"/>
    <lineage>
        <taxon>Bacteria</taxon>
        <taxon>Pseudomonadati</taxon>
        <taxon>Pseudomonadota</taxon>
        <taxon>Gammaproteobacteria</taxon>
        <taxon>Enterobacterales</taxon>
        <taxon>Yersiniaceae</taxon>
        <taxon>Yersinia</taxon>
    </lineage>
</organism>
<evidence type="ECO:0000250" key="1">
    <source>
        <dbReference type="UniProtKB" id="P77257"/>
    </source>
</evidence>
<evidence type="ECO:0000255" key="2">
    <source>
        <dbReference type="PROSITE-ProRule" id="PRU00434"/>
    </source>
</evidence>
<evidence type="ECO:0000256" key="3">
    <source>
        <dbReference type="SAM" id="MobiDB-lite"/>
    </source>
</evidence>
<evidence type="ECO:0000305" key="4"/>
<accession>Q1C138</accession>
<dbReference type="EC" id="7.6.2.13" evidence="1"/>
<dbReference type="EMBL" id="CP000308">
    <property type="protein sequence ID" value="ABG15834.1"/>
    <property type="molecule type" value="Genomic_DNA"/>
</dbReference>
<dbReference type="PIR" id="AC0051">
    <property type="entry name" value="AC0051"/>
</dbReference>
<dbReference type="RefSeq" id="WP_002209192.1">
    <property type="nucleotide sequence ID" value="NZ_CP009906.1"/>
</dbReference>
<dbReference type="SMR" id="Q1C138"/>
<dbReference type="GeneID" id="57974198"/>
<dbReference type="KEGG" id="ypa:YPA_3873"/>
<dbReference type="Proteomes" id="UP000001971">
    <property type="component" value="Chromosome"/>
</dbReference>
<dbReference type="GO" id="GO:0005886">
    <property type="term" value="C:plasma membrane"/>
    <property type="evidence" value="ECO:0007669"/>
    <property type="project" value="UniProtKB-SubCell"/>
</dbReference>
<dbReference type="GO" id="GO:0005524">
    <property type="term" value="F:ATP binding"/>
    <property type="evidence" value="ECO:0007669"/>
    <property type="project" value="UniProtKB-KW"/>
</dbReference>
<dbReference type="GO" id="GO:0016887">
    <property type="term" value="F:ATP hydrolysis activity"/>
    <property type="evidence" value="ECO:0007669"/>
    <property type="project" value="InterPro"/>
</dbReference>
<dbReference type="CDD" id="cd03216">
    <property type="entry name" value="ABC_Carb_Monos_I"/>
    <property type="match status" value="1"/>
</dbReference>
<dbReference type="CDD" id="cd03215">
    <property type="entry name" value="ABC_Carb_Monos_II"/>
    <property type="match status" value="1"/>
</dbReference>
<dbReference type="Gene3D" id="3.40.50.300">
    <property type="entry name" value="P-loop containing nucleotide triphosphate hydrolases"/>
    <property type="match status" value="2"/>
</dbReference>
<dbReference type="InterPro" id="IPR003593">
    <property type="entry name" value="AAA+_ATPase"/>
</dbReference>
<dbReference type="InterPro" id="IPR050107">
    <property type="entry name" value="ABC_carbohydrate_import_ATPase"/>
</dbReference>
<dbReference type="InterPro" id="IPR003439">
    <property type="entry name" value="ABC_transporter-like_ATP-bd"/>
</dbReference>
<dbReference type="InterPro" id="IPR017871">
    <property type="entry name" value="ABC_transporter-like_CS"/>
</dbReference>
<dbReference type="InterPro" id="IPR027417">
    <property type="entry name" value="P-loop_NTPase"/>
</dbReference>
<dbReference type="NCBIfam" id="NF011967">
    <property type="entry name" value="PRK15439.1"/>
    <property type="match status" value="1"/>
</dbReference>
<dbReference type="PANTHER" id="PTHR43790:SF2">
    <property type="entry name" value="AUTOINDUCER 2 IMPORT ATP-BINDING PROTEIN LSRA"/>
    <property type="match status" value="1"/>
</dbReference>
<dbReference type="PANTHER" id="PTHR43790">
    <property type="entry name" value="CARBOHYDRATE TRANSPORT ATP-BINDING PROTEIN MG119-RELATED"/>
    <property type="match status" value="1"/>
</dbReference>
<dbReference type="Pfam" id="PF00005">
    <property type="entry name" value="ABC_tran"/>
    <property type="match status" value="2"/>
</dbReference>
<dbReference type="SMART" id="SM00382">
    <property type="entry name" value="AAA"/>
    <property type="match status" value="2"/>
</dbReference>
<dbReference type="SUPFAM" id="SSF52540">
    <property type="entry name" value="P-loop containing nucleoside triphosphate hydrolases"/>
    <property type="match status" value="2"/>
</dbReference>
<dbReference type="PROSITE" id="PS00211">
    <property type="entry name" value="ABC_TRANSPORTER_1"/>
    <property type="match status" value="1"/>
</dbReference>
<dbReference type="PROSITE" id="PS50893">
    <property type="entry name" value="ABC_TRANSPORTER_2"/>
    <property type="match status" value="2"/>
</dbReference>
<gene>
    <name type="primary">lsrA</name>
    <name type="ordered locus">YPA_3873</name>
</gene>
<feature type="chain" id="PRO_0000351311" description="Autoinducer 2 import ATP-binding protein LsrA">
    <location>
        <begin position="1"/>
        <end position="527"/>
    </location>
</feature>
<feature type="domain" description="ABC transporter 1" evidence="2">
    <location>
        <begin position="12"/>
        <end position="240"/>
    </location>
</feature>
<feature type="domain" description="ABC transporter 2" evidence="2">
    <location>
        <begin position="266"/>
        <end position="506"/>
    </location>
</feature>
<feature type="region of interest" description="Disordered" evidence="3">
    <location>
        <begin position="507"/>
        <end position="527"/>
    </location>
</feature>
<feature type="compositionally biased region" description="Polar residues" evidence="3">
    <location>
        <begin position="510"/>
        <end position="521"/>
    </location>
</feature>
<feature type="binding site" evidence="2">
    <location>
        <begin position="44"/>
        <end position="51"/>
    </location>
    <ligand>
        <name>ATP</name>
        <dbReference type="ChEBI" id="CHEBI:30616"/>
    </ligand>
</feature>
<sequence>MPHTVATPPPLLQVRGISKQFSGVVVLKSIDFTLQPGQVHALLGGNGAGKSTLMKIIAGILPPDTGVIEMNGQPCFNLTPAKAHQLGIYLVPQEPMLFANLSVQENILFRLPKHQADKKKMAQLLKNLGCHLDLSVSAGSLEVADQQLVEIMRGLIRDSHILILDEPTASLTPAETHRLFSQIRMLLQQGVGVVFISHKLPEIRQLADWVSVMRDGGIALSGATADFSTEDMIQAMTPEAQKGALTDSQKLWLELPGNRRAQSHAQSQQPVIHVHDLSGEGFAHISFHVQAGEILGLAGVVGAGRTELAETLYGLRPASTGNVILEEVNITAMKTANRLAAGLVYLPEDRQASGLYLDAPLSWNVCALAHDRQGLWTQPAQEAAVLERYRRALNIKFSHLEQPVRTLSGGNQQKLLIAKCLEANPLLLIIDEPTRGVDVSARSDIYQLIRSIAEQQVAIIFISSDLEEVVQMADRVLVMHQGEINGALSGAAMNVDTIMHMAFGEHRSASEPQGGTASSAENKGASC</sequence>
<comment type="function">
    <text evidence="1">Part of the ABC transporter complex LsrABCD involved in autoinducer 2 (AI-2) import. Responsible for energy coupling to the transport system.</text>
</comment>
<comment type="catalytic activity">
    <reaction evidence="1">
        <text>ATP + H2O + (2R,4S)-2-methyl-2,3,3,4-tetrahydroxytetrahydrofuran-[AI-2-binding protein]Side 1 = ADP + phosphate + (2R,4S)-2-methyl-2,3,3,4-tetrahydroxytetrahydrofuranSide 2 + [AI-2-binding protein]Side 1.</text>
        <dbReference type="EC" id="7.6.2.13"/>
    </reaction>
</comment>
<comment type="subunit">
    <text evidence="1">The complex is composed of two ATP-binding proteins (LsrA), two transmembrane proteins (LsrC and LsrD) and a solute-binding protein (LsrB).</text>
</comment>
<comment type="subcellular location">
    <subcellularLocation>
        <location evidence="1">Cell inner membrane</location>
        <topology evidence="1">Peripheral membrane protein</topology>
    </subcellularLocation>
</comment>
<comment type="similarity">
    <text evidence="4">Belongs to the ABC transporter superfamily. AI-2 autoinducer porter (TC 3.A.1.2.8) family.</text>
</comment>
<reference key="1">
    <citation type="journal article" date="2006" name="J. Bacteriol.">
        <title>Complete genome sequence of Yersinia pestis strains Antiqua and Nepal516: evidence of gene reduction in an emerging pathogen.</title>
        <authorList>
            <person name="Chain P.S.G."/>
            <person name="Hu P."/>
            <person name="Malfatti S.A."/>
            <person name="Radnedge L."/>
            <person name="Larimer F."/>
            <person name="Vergez L.M."/>
            <person name="Worsham P."/>
            <person name="Chu M.C."/>
            <person name="Andersen G.L."/>
        </authorList>
    </citation>
    <scope>NUCLEOTIDE SEQUENCE [LARGE SCALE GENOMIC DNA]</scope>
    <source>
        <strain>Antiqua</strain>
    </source>
</reference>
<name>LSRA_YERPA</name>
<proteinExistence type="inferred from homology"/>
<keyword id="KW-0067">ATP-binding</keyword>
<keyword id="KW-0997">Cell inner membrane</keyword>
<keyword id="KW-1003">Cell membrane</keyword>
<keyword id="KW-0472">Membrane</keyword>
<keyword id="KW-0547">Nucleotide-binding</keyword>
<keyword id="KW-0677">Repeat</keyword>
<keyword id="KW-1278">Translocase</keyword>
<keyword id="KW-0813">Transport</keyword>
<protein>
    <recommendedName>
        <fullName evidence="1">Autoinducer 2 import ATP-binding protein LsrA</fullName>
        <shortName evidence="1">AI-2 import ATP-binding protein LsrA</shortName>
        <ecNumber evidence="1">7.6.2.13</ecNumber>
    </recommendedName>
</protein>